<dbReference type="EMBL" id="BA000037">
    <property type="protein sequence ID" value="BAC93235.1"/>
    <property type="molecule type" value="Genomic_DNA"/>
</dbReference>
<dbReference type="RefSeq" id="WP_011078749.1">
    <property type="nucleotide sequence ID" value="NC_005139.1"/>
</dbReference>
<dbReference type="SMR" id="Q7MP93"/>
<dbReference type="STRING" id="672.VV93_v1c04380"/>
<dbReference type="GeneID" id="93894977"/>
<dbReference type="KEGG" id="vvy:VV0471"/>
<dbReference type="eggNOG" id="COG0211">
    <property type="taxonomic scope" value="Bacteria"/>
</dbReference>
<dbReference type="HOGENOM" id="CLU_095424_4_1_6"/>
<dbReference type="Proteomes" id="UP000002675">
    <property type="component" value="Chromosome I"/>
</dbReference>
<dbReference type="GO" id="GO:0022625">
    <property type="term" value="C:cytosolic large ribosomal subunit"/>
    <property type="evidence" value="ECO:0007669"/>
    <property type="project" value="TreeGrafter"/>
</dbReference>
<dbReference type="GO" id="GO:0003735">
    <property type="term" value="F:structural constituent of ribosome"/>
    <property type="evidence" value="ECO:0007669"/>
    <property type="project" value="InterPro"/>
</dbReference>
<dbReference type="GO" id="GO:0006412">
    <property type="term" value="P:translation"/>
    <property type="evidence" value="ECO:0007669"/>
    <property type="project" value="UniProtKB-UniRule"/>
</dbReference>
<dbReference type="FunFam" id="2.40.50.100:FF:000001">
    <property type="entry name" value="50S ribosomal protein L27"/>
    <property type="match status" value="1"/>
</dbReference>
<dbReference type="Gene3D" id="2.40.50.100">
    <property type="match status" value="1"/>
</dbReference>
<dbReference type="HAMAP" id="MF_00539">
    <property type="entry name" value="Ribosomal_bL27"/>
    <property type="match status" value="1"/>
</dbReference>
<dbReference type="InterPro" id="IPR001684">
    <property type="entry name" value="Ribosomal_bL27"/>
</dbReference>
<dbReference type="InterPro" id="IPR018261">
    <property type="entry name" value="Ribosomal_bL27_CS"/>
</dbReference>
<dbReference type="NCBIfam" id="TIGR00062">
    <property type="entry name" value="L27"/>
    <property type="match status" value="1"/>
</dbReference>
<dbReference type="PANTHER" id="PTHR15893:SF0">
    <property type="entry name" value="LARGE RIBOSOMAL SUBUNIT PROTEIN BL27M"/>
    <property type="match status" value="1"/>
</dbReference>
<dbReference type="PANTHER" id="PTHR15893">
    <property type="entry name" value="RIBOSOMAL PROTEIN L27"/>
    <property type="match status" value="1"/>
</dbReference>
<dbReference type="Pfam" id="PF01016">
    <property type="entry name" value="Ribosomal_L27"/>
    <property type="match status" value="1"/>
</dbReference>
<dbReference type="PRINTS" id="PR00063">
    <property type="entry name" value="RIBOSOMALL27"/>
</dbReference>
<dbReference type="SUPFAM" id="SSF110324">
    <property type="entry name" value="Ribosomal L27 protein-like"/>
    <property type="match status" value="1"/>
</dbReference>
<dbReference type="PROSITE" id="PS00831">
    <property type="entry name" value="RIBOSOMAL_L27"/>
    <property type="match status" value="1"/>
</dbReference>
<sequence length="85" mass="9193">MAHKKAGGSTRNGRDSESKRLGVKRFGGESVLAGNIIVRQRGTQFHAGNNVGLGKDHTLFALTDGKVKFEVKGPKNRKFVSIEAE</sequence>
<proteinExistence type="inferred from homology"/>
<keyword id="KW-0687">Ribonucleoprotein</keyword>
<keyword id="KW-0689">Ribosomal protein</keyword>
<feature type="chain" id="PRO_0000181205" description="Large ribosomal subunit protein bL27">
    <location>
        <begin position="1"/>
        <end position="85"/>
    </location>
</feature>
<feature type="region of interest" description="Disordered" evidence="2">
    <location>
        <begin position="1"/>
        <end position="22"/>
    </location>
</feature>
<reference key="1">
    <citation type="journal article" date="2003" name="Genome Res.">
        <title>Comparative genome analysis of Vibrio vulnificus, a marine pathogen.</title>
        <authorList>
            <person name="Chen C.-Y."/>
            <person name="Wu K.-M."/>
            <person name="Chang Y.-C."/>
            <person name="Chang C.-H."/>
            <person name="Tsai H.-C."/>
            <person name="Liao T.-L."/>
            <person name="Liu Y.-M."/>
            <person name="Chen H.-J."/>
            <person name="Shen A.B.-T."/>
            <person name="Li J.-C."/>
            <person name="Su T.-L."/>
            <person name="Shao C.-P."/>
            <person name="Lee C.-T."/>
            <person name="Hor L.-I."/>
            <person name="Tsai S.-F."/>
        </authorList>
    </citation>
    <scope>NUCLEOTIDE SEQUENCE [LARGE SCALE GENOMIC DNA]</scope>
    <source>
        <strain>YJ016</strain>
    </source>
</reference>
<gene>
    <name evidence="1" type="primary">rpmA</name>
    <name type="ordered locus">VV0471</name>
</gene>
<comment type="similarity">
    <text evidence="1">Belongs to the bacterial ribosomal protein bL27 family.</text>
</comment>
<name>RL27_VIBVY</name>
<evidence type="ECO:0000255" key="1">
    <source>
        <dbReference type="HAMAP-Rule" id="MF_00539"/>
    </source>
</evidence>
<evidence type="ECO:0000256" key="2">
    <source>
        <dbReference type="SAM" id="MobiDB-lite"/>
    </source>
</evidence>
<evidence type="ECO:0000305" key="3"/>
<protein>
    <recommendedName>
        <fullName evidence="1">Large ribosomal subunit protein bL27</fullName>
    </recommendedName>
    <alternativeName>
        <fullName evidence="3">50S ribosomal protein L27</fullName>
    </alternativeName>
</protein>
<organism>
    <name type="scientific">Vibrio vulnificus (strain YJ016)</name>
    <dbReference type="NCBI Taxonomy" id="196600"/>
    <lineage>
        <taxon>Bacteria</taxon>
        <taxon>Pseudomonadati</taxon>
        <taxon>Pseudomonadota</taxon>
        <taxon>Gammaproteobacteria</taxon>
        <taxon>Vibrionales</taxon>
        <taxon>Vibrionaceae</taxon>
        <taxon>Vibrio</taxon>
    </lineage>
</organism>
<accession>Q7MP93</accession>